<keyword id="KW-0963">Cytoplasm</keyword>
<keyword id="KW-0479">Metal-binding</keyword>
<keyword id="KW-0520">NAD</keyword>
<keyword id="KW-0560">Oxidoreductase</keyword>
<keyword id="KW-0862">Zinc</keyword>
<comment type="function">
    <text evidence="1">Catalyzes the NAD(+)-dependent oxidation of L-threonine to 2-amino-3-ketobutyrate.</text>
</comment>
<comment type="catalytic activity">
    <reaction evidence="1">
        <text>L-threonine + NAD(+) = (2S)-2-amino-3-oxobutanoate + NADH + H(+)</text>
        <dbReference type="Rhea" id="RHEA:13161"/>
        <dbReference type="ChEBI" id="CHEBI:15378"/>
        <dbReference type="ChEBI" id="CHEBI:57540"/>
        <dbReference type="ChEBI" id="CHEBI:57926"/>
        <dbReference type="ChEBI" id="CHEBI:57945"/>
        <dbReference type="ChEBI" id="CHEBI:78948"/>
        <dbReference type="EC" id="1.1.1.103"/>
    </reaction>
</comment>
<comment type="cofactor">
    <cofactor evidence="1">
        <name>Zn(2+)</name>
        <dbReference type="ChEBI" id="CHEBI:29105"/>
    </cofactor>
    <text evidence="1">Binds 2 Zn(2+) ions per subunit.</text>
</comment>
<comment type="pathway">
    <text evidence="1">Amino-acid degradation; L-threonine degradation via oxydo-reductase pathway; glycine from L-threonine: step 1/2.</text>
</comment>
<comment type="subunit">
    <text evidence="1">Homotetramer.</text>
</comment>
<comment type="subcellular location">
    <subcellularLocation>
        <location evidence="1">Cytoplasm</location>
    </subcellularLocation>
</comment>
<comment type="similarity">
    <text evidence="1">Belongs to the zinc-containing alcohol dehydrogenase family.</text>
</comment>
<feature type="chain" id="PRO_1000051621" description="L-threonine 3-dehydrogenase">
    <location>
        <begin position="1"/>
        <end position="343"/>
    </location>
</feature>
<feature type="active site" description="Charge relay system" evidence="1">
    <location>
        <position position="40"/>
    </location>
</feature>
<feature type="active site" description="Charge relay system" evidence="1">
    <location>
        <position position="43"/>
    </location>
</feature>
<feature type="binding site" evidence="1">
    <location>
        <position position="38"/>
    </location>
    <ligand>
        <name>Zn(2+)</name>
        <dbReference type="ChEBI" id="CHEBI:29105"/>
        <label>1</label>
        <note>catalytic</note>
    </ligand>
</feature>
<feature type="binding site" evidence="1">
    <location>
        <position position="63"/>
    </location>
    <ligand>
        <name>Zn(2+)</name>
        <dbReference type="ChEBI" id="CHEBI:29105"/>
        <label>1</label>
        <note>catalytic</note>
    </ligand>
</feature>
<feature type="binding site" evidence="1">
    <location>
        <position position="64"/>
    </location>
    <ligand>
        <name>Zn(2+)</name>
        <dbReference type="ChEBI" id="CHEBI:29105"/>
        <label>1</label>
        <note>catalytic</note>
    </ligand>
</feature>
<feature type="binding site" evidence="1">
    <location>
        <position position="93"/>
    </location>
    <ligand>
        <name>Zn(2+)</name>
        <dbReference type="ChEBI" id="CHEBI:29105"/>
        <label>2</label>
    </ligand>
</feature>
<feature type="binding site" evidence="1">
    <location>
        <position position="96"/>
    </location>
    <ligand>
        <name>Zn(2+)</name>
        <dbReference type="ChEBI" id="CHEBI:29105"/>
        <label>2</label>
    </ligand>
</feature>
<feature type="binding site" evidence="1">
    <location>
        <position position="99"/>
    </location>
    <ligand>
        <name>Zn(2+)</name>
        <dbReference type="ChEBI" id="CHEBI:29105"/>
        <label>2</label>
    </ligand>
</feature>
<feature type="binding site" evidence="1">
    <location>
        <position position="107"/>
    </location>
    <ligand>
        <name>Zn(2+)</name>
        <dbReference type="ChEBI" id="CHEBI:29105"/>
        <label>2</label>
    </ligand>
</feature>
<feature type="binding site" evidence="1">
    <location>
        <position position="175"/>
    </location>
    <ligand>
        <name>NAD(+)</name>
        <dbReference type="ChEBI" id="CHEBI:57540"/>
    </ligand>
</feature>
<feature type="binding site" evidence="1">
    <location>
        <position position="195"/>
    </location>
    <ligand>
        <name>NAD(+)</name>
        <dbReference type="ChEBI" id="CHEBI:57540"/>
    </ligand>
</feature>
<feature type="binding site" evidence="1">
    <location>
        <position position="200"/>
    </location>
    <ligand>
        <name>NAD(+)</name>
        <dbReference type="ChEBI" id="CHEBI:57540"/>
    </ligand>
</feature>
<feature type="binding site" evidence="1">
    <location>
        <begin position="262"/>
        <end position="264"/>
    </location>
    <ligand>
        <name>NAD(+)</name>
        <dbReference type="ChEBI" id="CHEBI:57540"/>
    </ligand>
</feature>
<feature type="binding site" evidence="1">
    <location>
        <begin position="286"/>
        <end position="287"/>
    </location>
    <ligand>
        <name>NAD(+)</name>
        <dbReference type="ChEBI" id="CHEBI:57540"/>
    </ligand>
</feature>
<feature type="site" description="Important for catalytic activity for the proton relay mechanism but does not participate directly in the coordination of zinc atom" evidence="1">
    <location>
        <position position="148"/>
    </location>
</feature>
<accession>A2RZW5</accession>
<accession>A2RZW4</accession>
<evidence type="ECO:0000255" key="1">
    <source>
        <dbReference type="HAMAP-Rule" id="MF_00627"/>
    </source>
</evidence>
<organism>
    <name type="scientific">Burkholderia mallei (strain NCTC 10229)</name>
    <dbReference type="NCBI Taxonomy" id="412022"/>
    <lineage>
        <taxon>Bacteria</taxon>
        <taxon>Pseudomonadati</taxon>
        <taxon>Pseudomonadota</taxon>
        <taxon>Betaproteobacteria</taxon>
        <taxon>Burkholderiales</taxon>
        <taxon>Burkholderiaceae</taxon>
        <taxon>Burkholderia</taxon>
        <taxon>pseudomallei group</taxon>
    </lineage>
</organism>
<gene>
    <name evidence="1" type="primary">tdh</name>
    <name type="ordered locus">BMA10229_1431</name>
</gene>
<reference key="1">
    <citation type="journal article" date="2010" name="Genome Biol. Evol.">
        <title>Continuing evolution of Burkholderia mallei through genome reduction and large-scale rearrangements.</title>
        <authorList>
            <person name="Losada L."/>
            <person name="Ronning C.M."/>
            <person name="DeShazer D."/>
            <person name="Woods D."/>
            <person name="Fedorova N."/>
            <person name="Kim H.S."/>
            <person name="Shabalina S.A."/>
            <person name="Pearson T.R."/>
            <person name="Brinkac L."/>
            <person name="Tan P."/>
            <person name="Nandi T."/>
            <person name="Crabtree J."/>
            <person name="Badger J."/>
            <person name="Beckstrom-Sternberg S."/>
            <person name="Saqib M."/>
            <person name="Schutzer S.E."/>
            <person name="Keim P."/>
            <person name="Nierman W.C."/>
        </authorList>
    </citation>
    <scope>NUCLEOTIDE SEQUENCE [LARGE SCALE GENOMIC DNA]</scope>
    <source>
        <strain>NCTC 10229</strain>
    </source>
</reference>
<dbReference type="EC" id="1.1.1.103" evidence="1"/>
<dbReference type="EMBL" id="CP000545">
    <property type="protein sequence ID" value="ABN00197.2"/>
    <property type="molecule type" value="Genomic_DNA"/>
</dbReference>
<dbReference type="RefSeq" id="WP_004194543.1">
    <property type="nucleotide sequence ID" value="NC_008835.1"/>
</dbReference>
<dbReference type="SMR" id="A2RZW5"/>
<dbReference type="GeneID" id="93062068"/>
<dbReference type="KEGG" id="bml:BMA10229_1431"/>
<dbReference type="HOGENOM" id="CLU_026673_11_0_4"/>
<dbReference type="UniPathway" id="UPA00046">
    <property type="reaction ID" value="UER00505"/>
</dbReference>
<dbReference type="Proteomes" id="UP000002283">
    <property type="component" value="Chromosome II"/>
</dbReference>
<dbReference type="GO" id="GO:0005737">
    <property type="term" value="C:cytoplasm"/>
    <property type="evidence" value="ECO:0007669"/>
    <property type="project" value="UniProtKB-SubCell"/>
</dbReference>
<dbReference type="GO" id="GO:0008743">
    <property type="term" value="F:L-threonine 3-dehydrogenase activity"/>
    <property type="evidence" value="ECO:0007669"/>
    <property type="project" value="UniProtKB-UniRule"/>
</dbReference>
<dbReference type="GO" id="GO:0008270">
    <property type="term" value="F:zinc ion binding"/>
    <property type="evidence" value="ECO:0007669"/>
    <property type="project" value="UniProtKB-UniRule"/>
</dbReference>
<dbReference type="GO" id="GO:0019518">
    <property type="term" value="P:L-threonine catabolic process to glycine"/>
    <property type="evidence" value="ECO:0007669"/>
    <property type="project" value="UniProtKB-UniPathway"/>
</dbReference>
<dbReference type="Gene3D" id="3.90.180.10">
    <property type="entry name" value="Medium-chain alcohol dehydrogenases, catalytic domain"/>
    <property type="match status" value="1"/>
</dbReference>
<dbReference type="Gene3D" id="3.40.50.720">
    <property type="entry name" value="NAD(P)-binding Rossmann-like Domain"/>
    <property type="match status" value="1"/>
</dbReference>
<dbReference type="HAMAP" id="MF_00627">
    <property type="entry name" value="Thr_dehydrog"/>
    <property type="match status" value="1"/>
</dbReference>
<dbReference type="InterPro" id="IPR013149">
    <property type="entry name" value="ADH-like_C"/>
</dbReference>
<dbReference type="InterPro" id="IPR013154">
    <property type="entry name" value="ADH-like_N"/>
</dbReference>
<dbReference type="InterPro" id="IPR002328">
    <property type="entry name" value="ADH_Zn_CS"/>
</dbReference>
<dbReference type="InterPro" id="IPR011032">
    <property type="entry name" value="GroES-like_sf"/>
</dbReference>
<dbReference type="InterPro" id="IPR004627">
    <property type="entry name" value="L-Threonine_3-DHase"/>
</dbReference>
<dbReference type="InterPro" id="IPR036291">
    <property type="entry name" value="NAD(P)-bd_dom_sf"/>
</dbReference>
<dbReference type="InterPro" id="IPR020843">
    <property type="entry name" value="PKS_ER"/>
</dbReference>
<dbReference type="InterPro" id="IPR050129">
    <property type="entry name" value="Zn_alcohol_dh"/>
</dbReference>
<dbReference type="NCBIfam" id="NF003808">
    <property type="entry name" value="PRK05396.1"/>
    <property type="match status" value="1"/>
</dbReference>
<dbReference type="NCBIfam" id="TIGR00692">
    <property type="entry name" value="tdh"/>
    <property type="match status" value="1"/>
</dbReference>
<dbReference type="PANTHER" id="PTHR43401">
    <property type="entry name" value="L-THREONINE 3-DEHYDROGENASE"/>
    <property type="match status" value="1"/>
</dbReference>
<dbReference type="PANTHER" id="PTHR43401:SF2">
    <property type="entry name" value="L-THREONINE 3-DEHYDROGENASE"/>
    <property type="match status" value="1"/>
</dbReference>
<dbReference type="Pfam" id="PF08240">
    <property type="entry name" value="ADH_N"/>
    <property type="match status" value="1"/>
</dbReference>
<dbReference type="Pfam" id="PF00107">
    <property type="entry name" value="ADH_zinc_N"/>
    <property type="match status" value="1"/>
</dbReference>
<dbReference type="SMART" id="SM00829">
    <property type="entry name" value="PKS_ER"/>
    <property type="match status" value="1"/>
</dbReference>
<dbReference type="SUPFAM" id="SSF50129">
    <property type="entry name" value="GroES-like"/>
    <property type="match status" value="1"/>
</dbReference>
<dbReference type="SUPFAM" id="SSF51735">
    <property type="entry name" value="NAD(P)-binding Rossmann-fold domains"/>
    <property type="match status" value="1"/>
</dbReference>
<dbReference type="PROSITE" id="PS00059">
    <property type="entry name" value="ADH_ZINC"/>
    <property type="match status" value="1"/>
</dbReference>
<sequence length="343" mass="37461">MKALAKLERGPGLTLTRVKKPEVGHNDVLIKIRRTAICGTDIHIWKWDDWAQKTIPVPMHVGHEYVGEIVEMGQEVRGFSIGDRVSGEGHITCGFCRNCRAGRRHLCRNTVGVGVNREGAFAEYLAIPAFNAFKIPPEISDDLAAIFDPFGNATHTALSFNLVGEDVLITGAGPIGVMAVAIAKHVGARNVVITDINDYRLELARKMGATRAVNVSRESLRDVMADLHMTEGFDVGLEMSGVPSAFTSLLESMNHGGKVALLGIPPAQTAIDWNQVIFKGLEIKGIYGREMFETWYKMVAMLQSGLDLSPIITHRFAVDDYEKGFAAMLSGESGKVILDWADA</sequence>
<name>TDH_BURM9</name>
<proteinExistence type="inferred from homology"/>
<protein>
    <recommendedName>
        <fullName evidence="1">L-threonine 3-dehydrogenase</fullName>
        <shortName evidence="1">TDH</shortName>
        <ecNumber evidence="1">1.1.1.103</ecNumber>
    </recommendedName>
</protein>